<gene>
    <name evidence="1" type="primary">psbA</name>
</gene>
<proteinExistence type="inferred from homology"/>
<reference key="1">
    <citation type="journal article" date="2000" name="Nature">
        <title>Ancestral chloroplast genome in Mesostigma viride reveals an early branch of green plant evolution.</title>
        <authorList>
            <person name="Lemieux C."/>
            <person name="Otis C."/>
            <person name="Turmel M."/>
        </authorList>
    </citation>
    <scope>NUCLEOTIDE SEQUENCE [LARGE SCALE GENOMIC DNA]</scope>
    <source>
        <strain>NIES-296 / KY-14 / CCMP 2046</strain>
    </source>
</reference>
<keyword id="KW-0007">Acetylation</keyword>
<keyword id="KW-0106">Calcium</keyword>
<keyword id="KW-0148">Chlorophyll</keyword>
<keyword id="KW-0150">Chloroplast</keyword>
<keyword id="KW-0157">Chromophore</keyword>
<keyword id="KW-0249">Electron transport</keyword>
<keyword id="KW-0359">Herbicide resistance</keyword>
<keyword id="KW-0408">Iron</keyword>
<keyword id="KW-0460">Magnesium</keyword>
<keyword id="KW-0464">Manganese</keyword>
<keyword id="KW-0472">Membrane</keyword>
<keyword id="KW-0479">Metal-binding</keyword>
<keyword id="KW-0560">Oxidoreductase</keyword>
<keyword id="KW-0597">Phosphoprotein</keyword>
<keyword id="KW-0602">Photosynthesis</keyword>
<keyword id="KW-0604">Photosystem II</keyword>
<keyword id="KW-0934">Plastid</keyword>
<keyword id="KW-0793">Thylakoid</keyword>
<keyword id="KW-0812">Transmembrane</keyword>
<keyword id="KW-1133">Transmembrane helix</keyword>
<keyword id="KW-0813">Transport</keyword>
<accession>Q9MUW0</accession>
<organism>
    <name type="scientific">Mesostigma viride</name>
    <name type="common">Green alga</name>
    <dbReference type="NCBI Taxonomy" id="41882"/>
    <lineage>
        <taxon>Eukaryota</taxon>
        <taxon>Viridiplantae</taxon>
        <taxon>Streptophyta</taxon>
        <taxon>Mesostigmatophyceae</taxon>
        <taxon>Mesostigmatales</taxon>
        <taxon>Mesostigmataceae</taxon>
        <taxon>Mesostigma</taxon>
    </lineage>
</organism>
<sequence length="353" mass="38925">MTATLERRESANLWGRFCEFITSTENRLYIGWFGVIMIPCLLTAISVYIIAFVAAPPVDIDGIREPVSGSLLYGNNIISGSVIPMSNAIGLHFYPIWEAASLDEWLYNGGPYLMVVCHFLLGIACYMGREWELSFRLGMRPWIAVAYSAPVAAATAVFLIYPIGQGSFSDGMPLGISGTFNFMIVFQAEHNILMHPFHMLGVAGVFGGSLFSAMHGSLVTSSLIRETTENESANAGYKFGQEEETYNIVAAHGYFGRLIFQYASFNNSRSLHFFLAVWPVVGIWFTAMGISTMAFNLNGFNFNQSVVDSQGRVINTWADIINRANLGMEVMHERNAHNFPLDLASVEAPAVNG</sequence>
<protein>
    <recommendedName>
        <fullName evidence="1">Photosystem II protein D1</fullName>
        <shortName evidence="1">PSII D1 protein</shortName>
        <ecNumber evidence="1">1.10.3.9</ecNumber>
    </recommendedName>
    <alternativeName>
        <fullName evidence="1">Photosystem II Q(B) protein</fullName>
    </alternativeName>
</protein>
<evidence type="ECO:0000255" key="1">
    <source>
        <dbReference type="HAMAP-Rule" id="MF_01379"/>
    </source>
</evidence>
<name>PSBA_MESVI</name>
<comment type="function">
    <text evidence="1">Photosystem II (PSII) is a light-driven water:plastoquinone oxidoreductase that uses light energy to abstract electrons from H(2)O, generating O(2) and a proton gradient subsequently used for ATP formation. It consists of a core antenna complex that captures photons, and an electron transfer chain that converts photonic excitation into a charge separation. The D1/D2 (PsbA/PsbD) reaction center heterodimer binds P680, the primary electron donor of PSII as well as several subsequent electron acceptors.</text>
</comment>
<comment type="catalytic activity">
    <reaction evidence="1">
        <text>2 a plastoquinone + 4 hnu + 2 H2O = 2 a plastoquinol + O2</text>
        <dbReference type="Rhea" id="RHEA:36359"/>
        <dbReference type="Rhea" id="RHEA-COMP:9561"/>
        <dbReference type="Rhea" id="RHEA-COMP:9562"/>
        <dbReference type="ChEBI" id="CHEBI:15377"/>
        <dbReference type="ChEBI" id="CHEBI:15379"/>
        <dbReference type="ChEBI" id="CHEBI:17757"/>
        <dbReference type="ChEBI" id="CHEBI:30212"/>
        <dbReference type="ChEBI" id="CHEBI:62192"/>
        <dbReference type="EC" id="1.10.3.9"/>
    </reaction>
</comment>
<comment type="cofactor">
    <text evidence="1">The D1/D2 heterodimer binds P680, chlorophylls that are the primary electron donor of PSII, and subsequent electron acceptors. It shares a non-heme iron and each subunit binds pheophytin, quinone, additional chlorophylls, carotenoids and lipids. D1 provides most of the ligands for the Mn4-Ca-O5 cluster of the oxygen-evolving complex (OEC). There is also a Cl(-1) ion associated with D1 and D2, which is required for oxygen evolution. The PSII complex binds additional chlorophylls, carotenoids and specific lipids.</text>
</comment>
<comment type="subunit">
    <text evidence="1">PSII is composed of 1 copy each of membrane proteins PsbA, PsbB, PsbC, PsbD, PsbE, PsbF, PsbH, PsbI, PsbJ, PsbK, PsbL, PsbM, PsbT, PsbX, PsbY, PsbZ, Psb30/Ycf12, at least 3 peripheral proteins of the oxygen-evolving complex and a large number of cofactors. It forms dimeric complexes.</text>
</comment>
<comment type="subcellular location">
    <subcellularLocation>
        <location evidence="1">Plastid</location>
        <location evidence="1">Chloroplast thylakoid membrane</location>
        <topology evidence="1">Multi-pass membrane protein</topology>
    </subcellularLocation>
</comment>
<comment type="PTM">
    <text evidence="1">Tyr-161 forms a radical intermediate that is referred to as redox-active TyrZ, YZ or Y-Z.</text>
</comment>
<comment type="PTM">
    <text evidence="1">C-terminally processed by CTPA; processing is essential to allow assembly of the oxygen-evolving complex and thus photosynthetic growth.</text>
</comment>
<comment type="miscellaneous">
    <text evidence="1">2 of the reaction center chlorophylls (ChlD1 and ChlD2) are entirely coordinated by water.</text>
</comment>
<comment type="miscellaneous">
    <text evidence="1">Herbicides such as atrazine, BNT, diuron or ioxynil bind in the Q(B) binding site and block subsequent electron transfer.</text>
</comment>
<comment type="similarity">
    <text evidence="1">Belongs to the reaction center PufL/M/PsbA/D family.</text>
</comment>
<feature type="initiator methionine" description="Removed" evidence="1">
    <location>
        <position position="1"/>
    </location>
</feature>
<feature type="chain" id="PRO_0000090452" description="Photosystem II protein D1" evidence="1">
    <location>
        <begin position="2"/>
        <end position="344"/>
    </location>
</feature>
<feature type="propeptide" id="PRO_0000316462" evidence="1">
    <location>
        <begin position="345"/>
        <end position="353"/>
    </location>
</feature>
<feature type="transmembrane region" description="Helical" evidence="1">
    <location>
        <begin position="29"/>
        <end position="46"/>
    </location>
</feature>
<feature type="transmembrane region" description="Helical" evidence="1">
    <location>
        <begin position="118"/>
        <end position="133"/>
    </location>
</feature>
<feature type="transmembrane region" description="Helical" evidence="1">
    <location>
        <begin position="142"/>
        <end position="156"/>
    </location>
</feature>
<feature type="transmembrane region" description="Helical" evidence="1">
    <location>
        <begin position="197"/>
        <end position="218"/>
    </location>
</feature>
<feature type="transmembrane region" description="Helical" evidence="1">
    <location>
        <begin position="274"/>
        <end position="288"/>
    </location>
</feature>
<feature type="binding site" description="axial binding residue" evidence="1">
    <location>
        <position position="118"/>
    </location>
    <ligand>
        <name>chlorophyll a</name>
        <dbReference type="ChEBI" id="CHEBI:58416"/>
        <label>ChlzD1</label>
    </ligand>
    <ligandPart>
        <name>Mg</name>
        <dbReference type="ChEBI" id="CHEBI:25107"/>
    </ligandPart>
</feature>
<feature type="binding site" evidence="1">
    <location>
        <position position="126"/>
    </location>
    <ligand>
        <name>pheophytin a</name>
        <dbReference type="ChEBI" id="CHEBI:136840"/>
        <label>D1</label>
    </ligand>
</feature>
<feature type="binding site" evidence="1">
    <location>
        <position position="170"/>
    </location>
    <ligand>
        <name>[CaMn4O5] cluster</name>
        <dbReference type="ChEBI" id="CHEBI:189552"/>
    </ligand>
</feature>
<feature type="binding site" evidence="1">
    <location>
        <position position="189"/>
    </location>
    <ligand>
        <name>[CaMn4O5] cluster</name>
        <dbReference type="ChEBI" id="CHEBI:189552"/>
    </ligand>
</feature>
<feature type="binding site" description="axial binding residue" evidence="1">
    <location>
        <position position="198"/>
    </location>
    <ligand>
        <name>chlorophyll a</name>
        <dbReference type="ChEBI" id="CHEBI:58416"/>
        <label>PD1</label>
    </ligand>
    <ligandPart>
        <name>Mg</name>
        <dbReference type="ChEBI" id="CHEBI:25107"/>
    </ligandPart>
</feature>
<feature type="binding site" evidence="1">
    <location>
        <position position="215"/>
    </location>
    <ligand>
        <name>a quinone</name>
        <dbReference type="ChEBI" id="CHEBI:132124"/>
        <label>B</label>
    </ligand>
</feature>
<feature type="binding site" evidence="1">
    <location>
        <position position="215"/>
    </location>
    <ligand>
        <name>Fe cation</name>
        <dbReference type="ChEBI" id="CHEBI:24875"/>
        <note>ligand shared with heterodimeric partner</note>
    </ligand>
</feature>
<feature type="binding site" evidence="1">
    <location>
        <begin position="264"/>
        <end position="265"/>
    </location>
    <ligand>
        <name>a quinone</name>
        <dbReference type="ChEBI" id="CHEBI:132124"/>
        <label>B</label>
    </ligand>
</feature>
<feature type="binding site" evidence="1">
    <location>
        <position position="272"/>
    </location>
    <ligand>
        <name>Fe cation</name>
        <dbReference type="ChEBI" id="CHEBI:24875"/>
        <note>ligand shared with heterodimeric partner</note>
    </ligand>
</feature>
<feature type="binding site" evidence="1">
    <location>
        <position position="332"/>
    </location>
    <ligand>
        <name>[CaMn4O5] cluster</name>
        <dbReference type="ChEBI" id="CHEBI:189552"/>
    </ligand>
</feature>
<feature type="binding site" evidence="1">
    <location>
        <position position="333"/>
    </location>
    <ligand>
        <name>[CaMn4O5] cluster</name>
        <dbReference type="ChEBI" id="CHEBI:189552"/>
    </ligand>
</feature>
<feature type="binding site" evidence="1">
    <location>
        <position position="342"/>
    </location>
    <ligand>
        <name>[CaMn4O5] cluster</name>
        <dbReference type="ChEBI" id="CHEBI:189552"/>
    </ligand>
</feature>
<feature type="binding site" evidence="1">
    <location>
        <position position="344"/>
    </location>
    <ligand>
        <name>[CaMn4O5] cluster</name>
        <dbReference type="ChEBI" id="CHEBI:189552"/>
    </ligand>
</feature>
<feature type="site" description="Tyrosine radical intermediate" evidence="1">
    <location>
        <position position="161"/>
    </location>
</feature>
<feature type="site" description="Stabilizes free radical intermediate" evidence="1">
    <location>
        <position position="190"/>
    </location>
</feature>
<feature type="site" description="Cleavage; by CTPA" evidence="1">
    <location>
        <begin position="344"/>
        <end position="345"/>
    </location>
</feature>
<feature type="modified residue" description="N-acetylthreonine" evidence="1">
    <location>
        <position position="2"/>
    </location>
</feature>
<feature type="modified residue" description="Phosphothreonine" evidence="1">
    <location>
        <position position="2"/>
    </location>
</feature>
<geneLocation type="chloroplast"/>
<dbReference type="EC" id="1.10.3.9" evidence="1"/>
<dbReference type="EMBL" id="AF166114">
    <property type="protein sequence ID" value="AAF43791.1"/>
    <property type="molecule type" value="Genomic_DNA"/>
</dbReference>
<dbReference type="RefSeq" id="NP_038350.1">
    <property type="nucleotide sequence ID" value="NC_002186.1"/>
</dbReference>
<dbReference type="SMR" id="Q9MUW0"/>
<dbReference type="GeneID" id="800878"/>
<dbReference type="GO" id="GO:0009535">
    <property type="term" value="C:chloroplast thylakoid membrane"/>
    <property type="evidence" value="ECO:0007669"/>
    <property type="project" value="UniProtKB-SubCell"/>
</dbReference>
<dbReference type="GO" id="GO:0009523">
    <property type="term" value="C:photosystem II"/>
    <property type="evidence" value="ECO:0007669"/>
    <property type="project" value="UniProtKB-KW"/>
</dbReference>
<dbReference type="GO" id="GO:0016168">
    <property type="term" value="F:chlorophyll binding"/>
    <property type="evidence" value="ECO:0007669"/>
    <property type="project" value="UniProtKB-UniRule"/>
</dbReference>
<dbReference type="GO" id="GO:0045156">
    <property type="term" value="F:electron transporter, transferring electrons within the cyclic electron transport pathway of photosynthesis activity"/>
    <property type="evidence" value="ECO:0007669"/>
    <property type="project" value="InterPro"/>
</dbReference>
<dbReference type="GO" id="GO:0005506">
    <property type="term" value="F:iron ion binding"/>
    <property type="evidence" value="ECO:0007669"/>
    <property type="project" value="UniProtKB-UniRule"/>
</dbReference>
<dbReference type="GO" id="GO:0016682">
    <property type="term" value="F:oxidoreductase activity, acting on diphenols and related substances as donors, oxygen as acceptor"/>
    <property type="evidence" value="ECO:0007669"/>
    <property type="project" value="UniProtKB-UniRule"/>
</dbReference>
<dbReference type="GO" id="GO:0010242">
    <property type="term" value="F:oxygen evolving activity"/>
    <property type="evidence" value="ECO:0007669"/>
    <property type="project" value="UniProtKB-EC"/>
</dbReference>
<dbReference type="GO" id="GO:0009772">
    <property type="term" value="P:photosynthetic electron transport in photosystem II"/>
    <property type="evidence" value="ECO:0007669"/>
    <property type="project" value="InterPro"/>
</dbReference>
<dbReference type="GO" id="GO:0009635">
    <property type="term" value="P:response to herbicide"/>
    <property type="evidence" value="ECO:0007669"/>
    <property type="project" value="UniProtKB-KW"/>
</dbReference>
<dbReference type="CDD" id="cd09289">
    <property type="entry name" value="Photosystem-II_D1"/>
    <property type="match status" value="1"/>
</dbReference>
<dbReference type="FunFam" id="1.20.85.10:FF:000002">
    <property type="entry name" value="Photosystem II protein D1"/>
    <property type="match status" value="1"/>
</dbReference>
<dbReference type="Gene3D" id="1.20.85.10">
    <property type="entry name" value="Photosystem II protein D1-like"/>
    <property type="match status" value="1"/>
</dbReference>
<dbReference type="HAMAP" id="MF_01379">
    <property type="entry name" value="PSII_PsbA_D1"/>
    <property type="match status" value="1"/>
</dbReference>
<dbReference type="InterPro" id="IPR055266">
    <property type="entry name" value="D1/D2"/>
</dbReference>
<dbReference type="InterPro" id="IPR036854">
    <property type="entry name" value="Photo_II_D1/D2_sf"/>
</dbReference>
<dbReference type="InterPro" id="IPR000484">
    <property type="entry name" value="Photo_RC_L/M"/>
</dbReference>
<dbReference type="InterPro" id="IPR055265">
    <property type="entry name" value="Photo_RC_L/M_CS"/>
</dbReference>
<dbReference type="InterPro" id="IPR005867">
    <property type="entry name" value="PSII_D1"/>
</dbReference>
<dbReference type="NCBIfam" id="TIGR01151">
    <property type="entry name" value="psbA"/>
    <property type="match status" value="1"/>
</dbReference>
<dbReference type="PANTHER" id="PTHR33149:SF12">
    <property type="entry name" value="PHOTOSYSTEM II D2 PROTEIN"/>
    <property type="match status" value="1"/>
</dbReference>
<dbReference type="PANTHER" id="PTHR33149">
    <property type="entry name" value="PHOTOSYSTEM II PROTEIN D1"/>
    <property type="match status" value="1"/>
</dbReference>
<dbReference type="Pfam" id="PF00124">
    <property type="entry name" value="Photo_RC"/>
    <property type="match status" value="1"/>
</dbReference>
<dbReference type="PRINTS" id="PR00256">
    <property type="entry name" value="REACTNCENTRE"/>
</dbReference>
<dbReference type="SUPFAM" id="SSF81483">
    <property type="entry name" value="Bacterial photosystem II reaction centre, L and M subunits"/>
    <property type="match status" value="1"/>
</dbReference>
<dbReference type="PROSITE" id="PS00244">
    <property type="entry name" value="REACTION_CENTER"/>
    <property type="match status" value="1"/>
</dbReference>